<feature type="chain" id="PRO_0000290910" description="Small ribosomal subunit protein uS8">
    <location>
        <begin position="1"/>
        <end position="132"/>
    </location>
</feature>
<proteinExistence type="inferred from homology"/>
<keyword id="KW-1185">Reference proteome</keyword>
<keyword id="KW-0687">Ribonucleoprotein</keyword>
<keyword id="KW-0689">Ribosomal protein</keyword>
<keyword id="KW-0694">RNA-binding</keyword>
<keyword id="KW-0699">rRNA-binding</keyword>
<organism>
    <name type="scientific">Rhizobium etli (strain ATCC 51251 / DSM 11541 / JCM 21823 / NBRC 15573 / CFN 42)</name>
    <dbReference type="NCBI Taxonomy" id="347834"/>
    <lineage>
        <taxon>Bacteria</taxon>
        <taxon>Pseudomonadati</taxon>
        <taxon>Pseudomonadota</taxon>
        <taxon>Alphaproteobacteria</taxon>
        <taxon>Hyphomicrobiales</taxon>
        <taxon>Rhizobiaceae</taxon>
        <taxon>Rhizobium/Agrobacterium group</taxon>
        <taxon>Rhizobium</taxon>
    </lineage>
</organism>
<protein>
    <recommendedName>
        <fullName evidence="1">Small ribosomal subunit protein uS8</fullName>
    </recommendedName>
    <alternativeName>
        <fullName evidence="2">30S ribosomal protein S8</fullName>
    </alternativeName>
</protein>
<gene>
    <name evidence="1" type="primary">rpsH</name>
    <name type="ordered locus">RHE_CH01689</name>
</gene>
<accession>Q2K9K2</accession>
<comment type="function">
    <text evidence="1">One of the primary rRNA binding proteins, it binds directly to 16S rRNA central domain where it helps coordinate assembly of the platform of the 30S subunit.</text>
</comment>
<comment type="subunit">
    <text evidence="1">Part of the 30S ribosomal subunit. Contacts proteins S5 and S12.</text>
</comment>
<comment type="similarity">
    <text evidence="1">Belongs to the universal ribosomal protein uS8 family.</text>
</comment>
<dbReference type="EMBL" id="CP000133">
    <property type="protein sequence ID" value="ABC90484.1"/>
    <property type="molecule type" value="Genomic_DNA"/>
</dbReference>
<dbReference type="RefSeq" id="WP_004674934.1">
    <property type="nucleotide sequence ID" value="NC_007761.1"/>
</dbReference>
<dbReference type="SMR" id="Q2K9K2"/>
<dbReference type="GeneID" id="91148142"/>
<dbReference type="KEGG" id="ret:RHE_CH01689"/>
<dbReference type="eggNOG" id="COG0096">
    <property type="taxonomic scope" value="Bacteria"/>
</dbReference>
<dbReference type="HOGENOM" id="CLU_098428_0_0_5"/>
<dbReference type="OrthoDB" id="9802617at2"/>
<dbReference type="Proteomes" id="UP000001936">
    <property type="component" value="Chromosome"/>
</dbReference>
<dbReference type="GO" id="GO:1990904">
    <property type="term" value="C:ribonucleoprotein complex"/>
    <property type="evidence" value="ECO:0007669"/>
    <property type="project" value="UniProtKB-KW"/>
</dbReference>
<dbReference type="GO" id="GO:0005840">
    <property type="term" value="C:ribosome"/>
    <property type="evidence" value="ECO:0007669"/>
    <property type="project" value="UniProtKB-KW"/>
</dbReference>
<dbReference type="GO" id="GO:0019843">
    <property type="term" value="F:rRNA binding"/>
    <property type="evidence" value="ECO:0007669"/>
    <property type="project" value="UniProtKB-UniRule"/>
</dbReference>
<dbReference type="GO" id="GO:0003735">
    <property type="term" value="F:structural constituent of ribosome"/>
    <property type="evidence" value="ECO:0007669"/>
    <property type="project" value="InterPro"/>
</dbReference>
<dbReference type="GO" id="GO:0006412">
    <property type="term" value="P:translation"/>
    <property type="evidence" value="ECO:0007669"/>
    <property type="project" value="UniProtKB-UniRule"/>
</dbReference>
<dbReference type="FunFam" id="3.30.1370.30:FF:000002">
    <property type="entry name" value="30S ribosomal protein S8"/>
    <property type="match status" value="1"/>
</dbReference>
<dbReference type="FunFam" id="3.30.1490.10:FF:000001">
    <property type="entry name" value="30S ribosomal protein S8"/>
    <property type="match status" value="1"/>
</dbReference>
<dbReference type="Gene3D" id="3.30.1370.30">
    <property type="match status" value="1"/>
</dbReference>
<dbReference type="Gene3D" id="3.30.1490.10">
    <property type="match status" value="1"/>
</dbReference>
<dbReference type="HAMAP" id="MF_01302_B">
    <property type="entry name" value="Ribosomal_uS8_B"/>
    <property type="match status" value="1"/>
</dbReference>
<dbReference type="InterPro" id="IPR000630">
    <property type="entry name" value="Ribosomal_uS8"/>
</dbReference>
<dbReference type="InterPro" id="IPR047863">
    <property type="entry name" value="Ribosomal_uS8_CS"/>
</dbReference>
<dbReference type="InterPro" id="IPR035987">
    <property type="entry name" value="Ribosomal_uS8_sf"/>
</dbReference>
<dbReference type="NCBIfam" id="NF001109">
    <property type="entry name" value="PRK00136.1"/>
    <property type="match status" value="1"/>
</dbReference>
<dbReference type="PANTHER" id="PTHR11758">
    <property type="entry name" value="40S RIBOSOMAL PROTEIN S15A"/>
    <property type="match status" value="1"/>
</dbReference>
<dbReference type="Pfam" id="PF00410">
    <property type="entry name" value="Ribosomal_S8"/>
    <property type="match status" value="1"/>
</dbReference>
<dbReference type="SUPFAM" id="SSF56047">
    <property type="entry name" value="Ribosomal protein S8"/>
    <property type="match status" value="1"/>
</dbReference>
<dbReference type="PROSITE" id="PS00053">
    <property type="entry name" value="RIBOSOMAL_S8"/>
    <property type="match status" value="1"/>
</dbReference>
<sequence>MTMTDPLGDMLTRIRNGASRRKSSVSTPASKLRARVLDVLQSEGYIRGYSVVDFGNGKSELNIELKYYEGASVIREIGRVSKPGRRVYVSVKSIPQVANGLGITILSTPKGVMADHQAREQNVGGEVLCSVF</sequence>
<evidence type="ECO:0000255" key="1">
    <source>
        <dbReference type="HAMAP-Rule" id="MF_01302"/>
    </source>
</evidence>
<evidence type="ECO:0000305" key="2"/>
<name>RS8_RHIEC</name>
<reference key="1">
    <citation type="journal article" date="2006" name="Proc. Natl. Acad. Sci. U.S.A.">
        <title>The partitioned Rhizobium etli genome: genetic and metabolic redundancy in seven interacting replicons.</title>
        <authorList>
            <person name="Gonzalez V."/>
            <person name="Santamaria R.I."/>
            <person name="Bustos P."/>
            <person name="Hernandez-Gonzalez I."/>
            <person name="Medrano-Soto A."/>
            <person name="Moreno-Hagelsieb G."/>
            <person name="Janga S.C."/>
            <person name="Ramirez M.A."/>
            <person name="Jimenez-Jacinto V."/>
            <person name="Collado-Vides J."/>
            <person name="Davila G."/>
        </authorList>
    </citation>
    <scope>NUCLEOTIDE SEQUENCE [LARGE SCALE GENOMIC DNA]</scope>
    <source>
        <strain>ATCC 51251 / DSM 11541 / JCM 21823 / NBRC 15573 / CFN 42</strain>
    </source>
</reference>